<dbReference type="EMBL" id="AB602052">
    <property type="protein sequence ID" value="BAK08582.1"/>
    <property type="molecule type" value="mRNA"/>
</dbReference>
<dbReference type="GO" id="GO:0005576">
    <property type="term" value="C:extracellular region"/>
    <property type="evidence" value="ECO:0000314"/>
    <property type="project" value="UniProtKB"/>
</dbReference>
<dbReference type="GO" id="GO:0050832">
    <property type="term" value="P:defense response to fungus"/>
    <property type="evidence" value="ECO:0000314"/>
    <property type="project" value="UniProtKB"/>
</dbReference>
<dbReference type="GO" id="GO:0050829">
    <property type="term" value="P:defense response to Gram-negative bacterium"/>
    <property type="evidence" value="ECO:0000314"/>
    <property type="project" value="UniProtKB"/>
</dbReference>
<dbReference type="GO" id="GO:0050830">
    <property type="term" value="P:defense response to Gram-positive bacterium"/>
    <property type="evidence" value="ECO:0000314"/>
    <property type="project" value="UniProtKB"/>
</dbReference>
<dbReference type="GO" id="GO:0031640">
    <property type="term" value="P:killing of cells of another organism"/>
    <property type="evidence" value="ECO:0007669"/>
    <property type="project" value="UniProtKB-KW"/>
</dbReference>
<dbReference type="InterPro" id="IPR012521">
    <property type="entry name" value="Antimicrobial_frog_2"/>
</dbReference>
<dbReference type="InterPro" id="IPR004275">
    <property type="entry name" value="Frog_antimicrobial_propeptide"/>
</dbReference>
<dbReference type="Pfam" id="PF08023">
    <property type="entry name" value="Antimicrobial_2"/>
    <property type="match status" value="1"/>
</dbReference>
<dbReference type="Pfam" id="PF03032">
    <property type="entry name" value="FSAP_sig_propep"/>
    <property type="match status" value="1"/>
</dbReference>
<reference evidence="6" key="1">
    <citation type="journal article" date="2011" name="Peptides">
        <title>Identification and characterization of antimicrobial peptides from the skin of the endangered frog Odorrana ishikawae.</title>
        <authorList>
            <person name="Iwakoshi-Ukena E."/>
            <person name="Ukena K."/>
            <person name="Okimoto A."/>
            <person name="Soga M."/>
            <person name="Okada G."/>
            <person name="Sano N."/>
            <person name="Fujii T."/>
            <person name="Sugawara Y."/>
            <person name="Sumida M."/>
        </authorList>
    </citation>
    <scope>NUCLEOTIDE SEQUENCE [MRNA]</scope>
    <scope>PROTEIN SEQUENCE OF 39-84</scope>
    <scope>FUNCTION</scope>
    <scope>SYNTHESIS</scope>
    <scope>MASS SPECTROMETRY</scope>
    <source>
        <tissue evidence="4">Skin</tissue>
    </source>
</reference>
<feature type="signal peptide" evidence="2">
    <location>
        <begin position="1"/>
        <end position="22"/>
    </location>
</feature>
<feature type="propeptide" id="PRO_0000439609" description="Removed in mature form" evidence="5">
    <location>
        <begin position="23"/>
        <end position="36"/>
    </location>
</feature>
<feature type="peptide" id="PRO_0000439610" description="Esculentin-1ISb" evidence="3">
    <location>
        <begin position="39"/>
        <end position="84"/>
    </location>
</feature>
<feature type="disulfide bond" evidence="1">
    <location>
        <begin position="78"/>
        <end position="84"/>
    </location>
</feature>
<protein>
    <recommendedName>
        <fullName evidence="4">Esculentin-1ISb</fullName>
    </recommendedName>
</protein>
<accession>F1T150</accession>
<name>ES1IB_ODOIS</name>
<sequence length="84" mass="9154">MFTLKKPLLLIVLLGIISLSLCEQERAADEDEGTKIKRRIFSKIGGKAIKNLILKGIKNIGKEVGMDVIRTGIDVAGCKIKGEC</sequence>
<evidence type="ECO:0000250" key="1">
    <source>
        <dbReference type="UniProtKB" id="B3A0M9"/>
    </source>
</evidence>
<evidence type="ECO:0000255" key="2"/>
<evidence type="ECO:0000269" key="3">
    <source>
    </source>
</evidence>
<evidence type="ECO:0000303" key="4">
    <source>
    </source>
</evidence>
<evidence type="ECO:0000305" key="5">
    <source>
    </source>
</evidence>
<evidence type="ECO:0000312" key="6">
    <source>
        <dbReference type="EMBL" id="BAK08582.1"/>
    </source>
</evidence>
<keyword id="KW-0878">Amphibian defense peptide</keyword>
<keyword id="KW-0044">Antibiotic</keyword>
<keyword id="KW-0929">Antimicrobial</keyword>
<keyword id="KW-0165">Cleavage on pair of basic residues</keyword>
<keyword id="KW-0903">Direct protein sequencing</keyword>
<keyword id="KW-1015">Disulfide bond</keyword>
<keyword id="KW-0295">Fungicide</keyword>
<keyword id="KW-0964">Secreted</keyword>
<keyword id="KW-0732">Signal</keyword>
<organism evidence="4">
    <name type="scientific">Odorrana ishikawae</name>
    <name type="common">Ishikawa's frog</name>
    <name type="synonym">Rana ishikawae</name>
    <dbReference type="NCBI Taxonomy" id="310659"/>
    <lineage>
        <taxon>Eukaryota</taxon>
        <taxon>Metazoa</taxon>
        <taxon>Chordata</taxon>
        <taxon>Craniata</taxon>
        <taxon>Vertebrata</taxon>
        <taxon>Euteleostomi</taxon>
        <taxon>Amphibia</taxon>
        <taxon>Batrachia</taxon>
        <taxon>Anura</taxon>
        <taxon>Neobatrachia</taxon>
        <taxon>Ranoidea</taxon>
        <taxon>Ranidae</taxon>
        <taxon>Odorrana</taxon>
    </lineage>
</organism>
<comment type="function">
    <text evidence="3">Has antimicrobial activity against Gram-negative bacterium E.coli ATCC 8739 (MIC=3.1 ug), against Gram positive bacteria S.aureus ATCC 6538 (MIC=3.1 ug), methicillin-resistant S.aureus ATCC 43300 (MIC=12.5 ug), B.subtilis ATCC 6633 (MIC=12.5 ug) and against fungus C.albicans ATCC 90028 (MIC=50 ug).</text>
</comment>
<comment type="subcellular location">
    <subcellularLocation>
        <location evidence="5">Secreted</location>
    </subcellularLocation>
</comment>
<comment type="tissue specificity">
    <text evidence="5">Expressed by the skin glands.</text>
</comment>
<comment type="mass spectrometry" mass="4884.9" method="MALDI" evidence="3"/>
<comment type="similarity">
    <text evidence="2">Belongs to the frog skin active peptide (FSAP) family. Esculentin subfamily.</text>
</comment>
<comment type="online information" name="The antimicrobial peptide database">
    <link uri="https://wangapd3.com/database/query_output.php?ID=01704"/>
</comment>
<proteinExistence type="evidence at protein level"/>